<evidence type="ECO:0000250" key="1"/>
<evidence type="ECO:0000255" key="2"/>
<evidence type="ECO:0000256" key="3">
    <source>
        <dbReference type="SAM" id="MobiDB-lite"/>
    </source>
</evidence>
<evidence type="ECO:0000269" key="4">
    <source>
    </source>
</evidence>
<evidence type="ECO:0000305" key="5"/>
<proteinExistence type="evidence at transcript level"/>
<feature type="signal peptide" evidence="2">
    <location>
        <begin position="1"/>
        <end position="20"/>
    </location>
</feature>
<feature type="chain" id="PRO_0000326203" description="UPF0764 protein C16orf89 homolog">
    <location>
        <begin position="21"/>
        <end position="385"/>
    </location>
</feature>
<feature type="region of interest" description="Disordered" evidence="3">
    <location>
        <begin position="344"/>
        <end position="385"/>
    </location>
</feature>
<feature type="compositionally biased region" description="Polar residues" evidence="3">
    <location>
        <begin position="356"/>
        <end position="367"/>
    </location>
</feature>
<feature type="sequence conflict" description="In Ref. 1; BAE24246." evidence="5" ref="1">
    <original>M</original>
    <variation>V</variation>
    <location>
        <position position="252"/>
    </location>
</feature>
<sequence length="385" mass="43079">MARLGLLLLLLLALPPHFSSVSWPDTAQGTMANLILTALEKATLFLEDRLPTINLDGVVGFQVLEVQLRGVQEKWAHKPLLQPLSMRAGQMANTLSALLQKSIFYLKQSDPTYLREFQPSIQPGFWKLPNDWTRTNASLVYPWLEPLDSFSEESSDVCLVQLLGTGTDSSQPCRLSNFCRTLMTKAGCSGYSLSHQLLFFLWARMQGCTEGLFLQSQHYMDIFCANMMELNHRAEAVGYAYPTQDLFMENIMFCGMAGFSDFYKLRWLEAILSWQNPQVGCFGRPDTKGEPSEVPHQQGILRRVRRREKLFADGCSCHNTATAVAALGGFLYILAEYHPDNGDAHPEYYPNHGDPYSSSQSPASNYQDGAAGPDVQRTGRPLSVS</sequence>
<reference key="1">
    <citation type="journal article" date="2005" name="Science">
        <title>The transcriptional landscape of the mammalian genome.</title>
        <authorList>
            <person name="Carninci P."/>
            <person name="Kasukawa T."/>
            <person name="Katayama S."/>
            <person name="Gough J."/>
            <person name="Frith M.C."/>
            <person name="Maeda N."/>
            <person name="Oyama R."/>
            <person name="Ravasi T."/>
            <person name="Lenhard B."/>
            <person name="Wells C."/>
            <person name="Kodzius R."/>
            <person name="Shimokawa K."/>
            <person name="Bajic V.B."/>
            <person name="Brenner S.E."/>
            <person name="Batalov S."/>
            <person name="Forrest A.R."/>
            <person name="Zavolan M."/>
            <person name="Davis M.J."/>
            <person name="Wilming L.G."/>
            <person name="Aidinis V."/>
            <person name="Allen J.E."/>
            <person name="Ambesi-Impiombato A."/>
            <person name="Apweiler R."/>
            <person name="Aturaliya R.N."/>
            <person name="Bailey T.L."/>
            <person name="Bansal M."/>
            <person name="Baxter L."/>
            <person name="Beisel K.W."/>
            <person name="Bersano T."/>
            <person name="Bono H."/>
            <person name="Chalk A.M."/>
            <person name="Chiu K.P."/>
            <person name="Choudhary V."/>
            <person name="Christoffels A."/>
            <person name="Clutterbuck D.R."/>
            <person name="Crowe M.L."/>
            <person name="Dalla E."/>
            <person name="Dalrymple B.P."/>
            <person name="de Bono B."/>
            <person name="Della Gatta G."/>
            <person name="di Bernardo D."/>
            <person name="Down T."/>
            <person name="Engstrom P."/>
            <person name="Fagiolini M."/>
            <person name="Faulkner G."/>
            <person name="Fletcher C.F."/>
            <person name="Fukushima T."/>
            <person name="Furuno M."/>
            <person name="Futaki S."/>
            <person name="Gariboldi M."/>
            <person name="Georgii-Hemming P."/>
            <person name="Gingeras T.R."/>
            <person name="Gojobori T."/>
            <person name="Green R.E."/>
            <person name="Gustincich S."/>
            <person name="Harbers M."/>
            <person name="Hayashi Y."/>
            <person name="Hensch T.K."/>
            <person name="Hirokawa N."/>
            <person name="Hill D."/>
            <person name="Huminiecki L."/>
            <person name="Iacono M."/>
            <person name="Ikeo K."/>
            <person name="Iwama A."/>
            <person name="Ishikawa T."/>
            <person name="Jakt M."/>
            <person name="Kanapin A."/>
            <person name="Katoh M."/>
            <person name="Kawasawa Y."/>
            <person name="Kelso J."/>
            <person name="Kitamura H."/>
            <person name="Kitano H."/>
            <person name="Kollias G."/>
            <person name="Krishnan S.P."/>
            <person name="Kruger A."/>
            <person name="Kummerfeld S.K."/>
            <person name="Kurochkin I.V."/>
            <person name="Lareau L.F."/>
            <person name="Lazarevic D."/>
            <person name="Lipovich L."/>
            <person name="Liu J."/>
            <person name="Liuni S."/>
            <person name="McWilliam S."/>
            <person name="Madan Babu M."/>
            <person name="Madera M."/>
            <person name="Marchionni L."/>
            <person name="Matsuda H."/>
            <person name="Matsuzawa S."/>
            <person name="Miki H."/>
            <person name="Mignone F."/>
            <person name="Miyake S."/>
            <person name="Morris K."/>
            <person name="Mottagui-Tabar S."/>
            <person name="Mulder N."/>
            <person name="Nakano N."/>
            <person name="Nakauchi H."/>
            <person name="Ng P."/>
            <person name="Nilsson R."/>
            <person name="Nishiguchi S."/>
            <person name="Nishikawa S."/>
            <person name="Nori F."/>
            <person name="Ohara O."/>
            <person name="Okazaki Y."/>
            <person name="Orlando V."/>
            <person name="Pang K.C."/>
            <person name="Pavan W.J."/>
            <person name="Pavesi G."/>
            <person name="Pesole G."/>
            <person name="Petrovsky N."/>
            <person name="Piazza S."/>
            <person name="Reed J."/>
            <person name="Reid J.F."/>
            <person name="Ring B.Z."/>
            <person name="Ringwald M."/>
            <person name="Rost B."/>
            <person name="Ruan Y."/>
            <person name="Salzberg S.L."/>
            <person name="Sandelin A."/>
            <person name="Schneider C."/>
            <person name="Schoenbach C."/>
            <person name="Sekiguchi K."/>
            <person name="Semple C.A."/>
            <person name="Seno S."/>
            <person name="Sessa L."/>
            <person name="Sheng Y."/>
            <person name="Shibata Y."/>
            <person name="Shimada H."/>
            <person name="Shimada K."/>
            <person name="Silva D."/>
            <person name="Sinclair B."/>
            <person name="Sperling S."/>
            <person name="Stupka E."/>
            <person name="Sugiura K."/>
            <person name="Sultana R."/>
            <person name="Takenaka Y."/>
            <person name="Taki K."/>
            <person name="Tammoja K."/>
            <person name="Tan S.L."/>
            <person name="Tang S."/>
            <person name="Taylor M.S."/>
            <person name="Tegner J."/>
            <person name="Teichmann S.A."/>
            <person name="Ueda H.R."/>
            <person name="van Nimwegen E."/>
            <person name="Verardo R."/>
            <person name="Wei C.L."/>
            <person name="Yagi K."/>
            <person name="Yamanishi H."/>
            <person name="Zabarovsky E."/>
            <person name="Zhu S."/>
            <person name="Zimmer A."/>
            <person name="Hide W."/>
            <person name="Bult C."/>
            <person name="Grimmond S.M."/>
            <person name="Teasdale R.D."/>
            <person name="Liu E.T."/>
            <person name="Brusic V."/>
            <person name="Quackenbush J."/>
            <person name="Wahlestedt C."/>
            <person name="Mattick J.S."/>
            <person name="Hume D.A."/>
            <person name="Kai C."/>
            <person name="Sasaki D."/>
            <person name="Tomaru Y."/>
            <person name="Fukuda S."/>
            <person name="Kanamori-Katayama M."/>
            <person name="Suzuki M."/>
            <person name="Aoki J."/>
            <person name="Arakawa T."/>
            <person name="Iida J."/>
            <person name="Imamura K."/>
            <person name="Itoh M."/>
            <person name="Kato T."/>
            <person name="Kawaji H."/>
            <person name="Kawagashira N."/>
            <person name="Kawashima T."/>
            <person name="Kojima M."/>
            <person name="Kondo S."/>
            <person name="Konno H."/>
            <person name="Nakano K."/>
            <person name="Ninomiya N."/>
            <person name="Nishio T."/>
            <person name="Okada M."/>
            <person name="Plessy C."/>
            <person name="Shibata K."/>
            <person name="Shiraki T."/>
            <person name="Suzuki S."/>
            <person name="Tagami M."/>
            <person name="Waki K."/>
            <person name="Watahiki A."/>
            <person name="Okamura-Oho Y."/>
            <person name="Suzuki H."/>
            <person name="Kawai J."/>
            <person name="Hayashizaki Y."/>
        </authorList>
    </citation>
    <scope>NUCLEOTIDE SEQUENCE [LARGE SCALE MRNA]</scope>
    <source>
        <strain>C57BL/6J</strain>
        <tissue>Corpora quadrigemina</tissue>
    </source>
</reference>
<reference key="2">
    <citation type="submission" date="2005-07" db="EMBL/GenBank/DDBJ databases">
        <authorList>
            <person name="Mural R.J."/>
            <person name="Adams M.D."/>
            <person name="Myers E.W."/>
            <person name="Smith H.O."/>
            <person name="Venter J.C."/>
        </authorList>
    </citation>
    <scope>NUCLEOTIDE SEQUENCE [LARGE SCALE GENOMIC DNA]</scope>
</reference>
<reference key="3">
    <citation type="journal article" date="2004" name="Genome Res.">
        <title>The status, quality, and expansion of the NIH full-length cDNA project: the Mammalian Gene Collection (MGC).</title>
        <authorList>
            <consortium name="The MGC Project Team"/>
        </authorList>
    </citation>
    <scope>NUCLEOTIDE SEQUENCE [LARGE SCALE MRNA]</scope>
    <source>
        <tissue>Brain</tissue>
    </source>
</reference>
<reference key="4">
    <citation type="journal article" date="2010" name="Thyroid">
        <title>Initial characterization of C16orf89, a novel thyroid-specific gene.</title>
        <authorList>
            <person name="Afink G.B."/>
            <person name="Veenboer G."/>
            <person name="de Randamie J."/>
            <person name="Keijser R."/>
            <person name="Meischl C."/>
            <person name="Niessen H."/>
            <person name="Ris-Stalpers C."/>
        </authorList>
    </citation>
    <scope>TISSUE SPECIFICITY</scope>
    <scope>SUBCELLULAR LOCATION</scope>
    <scope>DEVELOPMENTAL STAGE</scope>
</reference>
<comment type="subunit">
    <text evidence="1">Homodimer.</text>
</comment>
<comment type="subcellular location">
    <subcellularLocation>
        <location evidence="4">Secreted</location>
    </subcellularLocation>
</comment>
<comment type="tissue specificity">
    <text evidence="4">Predominantly expressed in thyroid tissue.</text>
</comment>
<comment type="developmental stage">
    <text evidence="4">From embryonic day (E) 17.5 onward in the developing mouse thyroid and lung.</text>
</comment>
<comment type="PTM">
    <text>Glycosylated.</text>
</comment>
<comment type="similarity">
    <text evidence="5">Belongs to the UPF0764 family.</text>
</comment>
<protein>
    <recommendedName>
        <fullName>UPF0764 protein C16orf89 homolog</fullName>
    </recommendedName>
</protein>
<organism>
    <name type="scientific">Mus musculus</name>
    <name type="common">Mouse</name>
    <dbReference type="NCBI Taxonomy" id="10090"/>
    <lineage>
        <taxon>Eukaryota</taxon>
        <taxon>Metazoa</taxon>
        <taxon>Chordata</taxon>
        <taxon>Craniata</taxon>
        <taxon>Vertebrata</taxon>
        <taxon>Euteleostomi</taxon>
        <taxon>Mammalia</taxon>
        <taxon>Eutheria</taxon>
        <taxon>Euarchontoglires</taxon>
        <taxon>Glires</taxon>
        <taxon>Rodentia</taxon>
        <taxon>Myomorpha</taxon>
        <taxon>Muroidea</taxon>
        <taxon>Muridae</taxon>
        <taxon>Murinae</taxon>
        <taxon>Mus</taxon>
        <taxon>Mus</taxon>
    </lineage>
</organism>
<dbReference type="EMBL" id="AK140126">
    <property type="protein sequence ID" value="BAE24246.1"/>
    <property type="molecule type" value="mRNA"/>
</dbReference>
<dbReference type="EMBL" id="CH466521">
    <property type="protein sequence ID" value="EDK97282.1"/>
    <property type="molecule type" value="Genomic_DNA"/>
</dbReference>
<dbReference type="EMBL" id="BC150828">
    <property type="protein sequence ID" value="AAI50829.1"/>
    <property type="molecule type" value="mRNA"/>
</dbReference>
<dbReference type="EMBL" id="BC171979">
    <property type="protein sequence ID" value="AAI71979.1"/>
    <property type="molecule type" value="mRNA"/>
</dbReference>
<dbReference type="CCDS" id="CCDS27934.1"/>
<dbReference type="RefSeq" id="NP_001028392.2">
    <property type="nucleotide sequence ID" value="NM_001033220.4"/>
</dbReference>
<dbReference type="FunCoup" id="Q3UST5">
    <property type="interactions" value="139"/>
</dbReference>
<dbReference type="STRING" id="10090.ENSMUSP00000058860"/>
<dbReference type="iPTMnet" id="Q3UST5"/>
<dbReference type="PhosphoSitePlus" id="Q3UST5"/>
<dbReference type="PaxDb" id="10090-ENSMUSP00000058860"/>
<dbReference type="Antibodypedia" id="2199">
    <property type="antibodies" value="16 antibodies from 8 providers"/>
</dbReference>
<dbReference type="Ensembl" id="ENSMUST00000050160.6">
    <property type="protein sequence ID" value="ENSMUSP00000058860.5"/>
    <property type="gene ID" value="ENSMUSG00000051669.7"/>
</dbReference>
<dbReference type="GeneID" id="239691"/>
<dbReference type="KEGG" id="mmu:239691"/>
<dbReference type="UCSC" id="uc012aaz.1">
    <property type="organism name" value="mouse"/>
</dbReference>
<dbReference type="AGR" id="MGI:2146559"/>
<dbReference type="MGI" id="MGI:2146559">
    <property type="gene designation" value="AU021092"/>
</dbReference>
<dbReference type="VEuPathDB" id="HostDB:ENSMUSG00000051669"/>
<dbReference type="eggNOG" id="ENOG502RBYN">
    <property type="taxonomic scope" value="Eukaryota"/>
</dbReference>
<dbReference type="GeneTree" id="ENSGT00390000013433"/>
<dbReference type="HOGENOM" id="CLU_051286_1_0_1"/>
<dbReference type="InParanoid" id="Q3UST5"/>
<dbReference type="OMA" id="MTRPGCS"/>
<dbReference type="OrthoDB" id="5949187at2759"/>
<dbReference type="PhylomeDB" id="Q3UST5"/>
<dbReference type="TreeFam" id="TF332081"/>
<dbReference type="BioGRID-ORCS" id="239691">
    <property type="hits" value="0 hits in 75 CRISPR screens"/>
</dbReference>
<dbReference type="PRO" id="PR:Q3UST5"/>
<dbReference type="Proteomes" id="UP000000589">
    <property type="component" value="Chromosome 16"/>
</dbReference>
<dbReference type="RNAct" id="Q3UST5">
    <property type="molecule type" value="protein"/>
</dbReference>
<dbReference type="Bgee" id="ENSMUSG00000051669">
    <property type="expression patterns" value="Expressed in olfactory epithelium and 81 other cell types or tissues"/>
</dbReference>
<dbReference type="GO" id="GO:0005829">
    <property type="term" value="C:cytosol"/>
    <property type="evidence" value="ECO:0007669"/>
    <property type="project" value="Ensembl"/>
</dbReference>
<dbReference type="GO" id="GO:0005576">
    <property type="term" value="C:extracellular region"/>
    <property type="evidence" value="ECO:0007669"/>
    <property type="project" value="UniProtKB-SubCell"/>
</dbReference>
<dbReference type="GO" id="GO:0016020">
    <property type="term" value="C:membrane"/>
    <property type="evidence" value="ECO:0007669"/>
    <property type="project" value="Ensembl"/>
</dbReference>
<dbReference type="GO" id="GO:0042803">
    <property type="term" value="F:protein homodimerization activity"/>
    <property type="evidence" value="ECO:0007669"/>
    <property type="project" value="Ensembl"/>
</dbReference>
<dbReference type="InterPro" id="IPR031751">
    <property type="entry name" value="DUF4735"/>
</dbReference>
<dbReference type="PANTHER" id="PTHR33539">
    <property type="entry name" value="UPF0764 PROTEIN C16ORF89"/>
    <property type="match status" value="1"/>
</dbReference>
<dbReference type="PANTHER" id="PTHR33539:SF1">
    <property type="entry name" value="UPF0764 PROTEIN C16ORF89"/>
    <property type="match status" value="1"/>
</dbReference>
<dbReference type="Pfam" id="PF15882">
    <property type="entry name" value="DUF4735"/>
    <property type="match status" value="1"/>
</dbReference>
<keyword id="KW-0325">Glycoprotein</keyword>
<keyword id="KW-1185">Reference proteome</keyword>
<keyword id="KW-0964">Secreted</keyword>
<keyword id="KW-0732">Signal</keyword>
<name>CP089_MOUSE</name>
<accession>Q3UST5</accession>
<accession>B7ZWC6</accession>